<accession>Q07835</accession>
<sequence length="311" mass="34310">MQQDPSISSKQKSTAVIKMVISMVIFGSIGFFSEHTNLPSFELVFVRCLCATLFLGFCWLASGQYKTEKWSKRDVLQTLACGFFLVFNWVFLFKSFEETSVTIAISVYHLAPVLVLLLGSFFYREKLNVISVSSIIICFLGTALISGINGSTSLTQLMGSGIIWAVLAALFYAFTTLLGKGIHNLSPYTTTFLQTGLGVIILIPFIHFGAFADLSQGNWIMVVSTGIIHTGIVYLLFFDSLRFLSTKFISIIVFLDPAVAIVLDTVFTGFRPDLYQTLGIVMIFAGMALTLVRRQGKANVTAEGTDIEQIQ</sequence>
<dbReference type="EMBL" id="D31856">
    <property type="protein sequence ID" value="BAA06655.1"/>
    <property type="molecule type" value="Genomic_DNA"/>
</dbReference>
<dbReference type="EMBL" id="D29985">
    <property type="protein sequence ID" value="BAA06259.1"/>
    <property type="molecule type" value="Genomic_DNA"/>
</dbReference>
<dbReference type="EMBL" id="AL009126">
    <property type="protein sequence ID" value="CAB15960.1"/>
    <property type="molecule type" value="Genomic_DNA"/>
</dbReference>
<dbReference type="EMBL" id="L05634">
    <property type="protein sequence ID" value="AAA22882.1"/>
    <property type="status" value="ALT_SEQ"/>
    <property type="molecule type" value="Genomic_DNA"/>
</dbReference>
<dbReference type="PIR" id="B70083">
    <property type="entry name" value="B70083"/>
</dbReference>
<dbReference type="RefSeq" id="NP_391803.1">
    <property type="nucleotide sequence ID" value="NC_000964.3"/>
</dbReference>
<dbReference type="RefSeq" id="WP_003227165.1">
    <property type="nucleotide sequence ID" value="NZ_OZ025638.1"/>
</dbReference>
<dbReference type="SMR" id="Q07835"/>
<dbReference type="FunCoup" id="Q07835">
    <property type="interactions" value="108"/>
</dbReference>
<dbReference type="STRING" id="224308.BSU39240"/>
<dbReference type="PaxDb" id="224308-BSU39240"/>
<dbReference type="EnsemblBacteria" id="CAB15960">
    <property type="protein sequence ID" value="CAB15960"/>
    <property type="gene ID" value="BSU_39240"/>
</dbReference>
<dbReference type="GeneID" id="937510"/>
<dbReference type="KEGG" id="bsu:BSU39240"/>
<dbReference type="PATRIC" id="fig|224308.179.peg.4248"/>
<dbReference type="eggNOG" id="COG0697">
    <property type="taxonomic scope" value="Bacteria"/>
</dbReference>
<dbReference type="InParanoid" id="Q07835"/>
<dbReference type="OrthoDB" id="9814238at2"/>
<dbReference type="PhylomeDB" id="Q07835"/>
<dbReference type="BioCyc" id="BSUB:BSU39240-MONOMER"/>
<dbReference type="Proteomes" id="UP000001570">
    <property type="component" value="Chromosome"/>
</dbReference>
<dbReference type="GO" id="GO:0016020">
    <property type="term" value="C:membrane"/>
    <property type="evidence" value="ECO:0000318"/>
    <property type="project" value="GO_Central"/>
</dbReference>
<dbReference type="GO" id="GO:0005886">
    <property type="term" value="C:plasma membrane"/>
    <property type="evidence" value="ECO:0007669"/>
    <property type="project" value="UniProtKB-SubCell"/>
</dbReference>
<dbReference type="FunFam" id="1.10.3730.20:FF:000010">
    <property type="entry name" value="EamA family transporter"/>
    <property type="match status" value="1"/>
</dbReference>
<dbReference type="Gene3D" id="1.10.3730.20">
    <property type="match status" value="1"/>
</dbReference>
<dbReference type="InterPro" id="IPR000620">
    <property type="entry name" value="EamA_dom"/>
</dbReference>
<dbReference type="PANTHER" id="PTHR22911">
    <property type="entry name" value="ACYL-MALONYL CONDENSING ENZYME-RELATED"/>
    <property type="match status" value="1"/>
</dbReference>
<dbReference type="PANTHER" id="PTHR22911:SF102">
    <property type="entry name" value="MEMBRANE PROTEIN"/>
    <property type="match status" value="1"/>
</dbReference>
<dbReference type="Pfam" id="PF00892">
    <property type="entry name" value="EamA"/>
    <property type="match status" value="2"/>
</dbReference>
<dbReference type="SUPFAM" id="SSF103481">
    <property type="entry name" value="Multidrug resistance efflux transporter EmrE"/>
    <property type="match status" value="2"/>
</dbReference>
<comment type="subcellular location">
    <subcellularLocation>
        <location evidence="2">Cell membrane</location>
        <topology evidence="2">Multi-pass membrane protein</topology>
    </subcellularLocation>
</comment>
<comment type="similarity">
    <text evidence="2">Belongs to the EamA transporter family.</text>
</comment>
<proteinExistence type="inferred from homology"/>
<protein>
    <recommendedName>
        <fullName>Uncharacterized transporter YxxF</fullName>
    </recommendedName>
</protein>
<evidence type="ECO:0000255" key="1"/>
<evidence type="ECO:0000305" key="2"/>
<organism>
    <name type="scientific">Bacillus subtilis (strain 168)</name>
    <dbReference type="NCBI Taxonomy" id="224308"/>
    <lineage>
        <taxon>Bacteria</taxon>
        <taxon>Bacillati</taxon>
        <taxon>Bacillota</taxon>
        <taxon>Bacilli</taxon>
        <taxon>Bacillales</taxon>
        <taxon>Bacillaceae</taxon>
        <taxon>Bacillus</taxon>
    </lineage>
</organism>
<reference key="1">
    <citation type="journal article" date="1995" name="Microbiology">
        <title>Cloning and sequencing of a 29 kb region of the Bacillus subtilis genome containing the hut and wapA loci.</title>
        <authorList>
            <person name="Yoshida K."/>
            <person name="Sano H."/>
            <person name="Seki S."/>
            <person name="Oda M."/>
            <person name="Fujimura M."/>
            <person name="Fujita Y."/>
        </authorList>
    </citation>
    <scope>NUCLEOTIDE SEQUENCE [GENOMIC DNA]</scope>
    <source>
        <strain>168 / BGSC1A1</strain>
    </source>
</reference>
<reference key="2">
    <citation type="journal article" date="1997" name="Nature">
        <title>The complete genome sequence of the Gram-positive bacterium Bacillus subtilis.</title>
        <authorList>
            <person name="Kunst F."/>
            <person name="Ogasawara N."/>
            <person name="Moszer I."/>
            <person name="Albertini A.M."/>
            <person name="Alloni G."/>
            <person name="Azevedo V."/>
            <person name="Bertero M.G."/>
            <person name="Bessieres P."/>
            <person name="Bolotin A."/>
            <person name="Borchert S."/>
            <person name="Borriss R."/>
            <person name="Boursier L."/>
            <person name="Brans A."/>
            <person name="Braun M."/>
            <person name="Brignell S.C."/>
            <person name="Bron S."/>
            <person name="Brouillet S."/>
            <person name="Bruschi C.V."/>
            <person name="Caldwell B."/>
            <person name="Capuano V."/>
            <person name="Carter N.M."/>
            <person name="Choi S.-K."/>
            <person name="Codani J.-J."/>
            <person name="Connerton I.F."/>
            <person name="Cummings N.J."/>
            <person name="Daniel R.A."/>
            <person name="Denizot F."/>
            <person name="Devine K.M."/>
            <person name="Duesterhoeft A."/>
            <person name="Ehrlich S.D."/>
            <person name="Emmerson P.T."/>
            <person name="Entian K.-D."/>
            <person name="Errington J."/>
            <person name="Fabret C."/>
            <person name="Ferrari E."/>
            <person name="Foulger D."/>
            <person name="Fritz C."/>
            <person name="Fujita M."/>
            <person name="Fujita Y."/>
            <person name="Fuma S."/>
            <person name="Galizzi A."/>
            <person name="Galleron N."/>
            <person name="Ghim S.-Y."/>
            <person name="Glaser P."/>
            <person name="Goffeau A."/>
            <person name="Golightly E.J."/>
            <person name="Grandi G."/>
            <person name="Guiseppi G."/>
            <person name="Guy B.J."/>
            <person name="Haga K."/>
            <person name="Haiech J."/>
            <person name="Harwood C.R."/>
            <person name="Henaut A."/>
            <person name="Hilbert H."/>
            <person name="Holsappel S."/>
            <person name="Hosono S."/>
            <person name="Hullo M.-F."/>
            <person name="Itaya M."/>
            <person name="Jones L.-M."/>
            <person name="Joris B."/>
            <person name="Karamata D."/>
            <person name="Kasahara Y."/>
            <person name="Klaerr-Blanchard M."/>
            <person name="Klein C."/>
            <person name="Kobayashi Y."/>
            <person name="Koetter P."/>
            <person name="Koningstein G."/>
            <person name="Krogh S."/>
            <person name="Kumano M."/>
            <person name="Kurita K."/>
            <person name="Lapidus A."/>
            <person name="Lardinois S."/>
            <person name="Lauber J."/>
            <person name="Lazarevic V."/>
            <person name="Lee S.-M."/>
            <person name="Levine A."/>
            <person name="Liu H."/>
            <person name="Masuda S."/>
            <person name="Mauel C."/>
            <person name="Medigue C."/>
            <person name="Medina N."/>
            <person name="Mellado R.P."/>
            <person name="Mizuno M."/>
            <person name="Moestl D."/>
            <person name="Nakai S."/>
            <person name="Noback M."/>
            <person name="Noone D."/>
            <person name="O'Reilly M."/>
            <person name="Ogawa K."/>
            <person name="Ogiwara A."/>
            <person name="Oudega B."/>
            <person name="Park S.-H."/>
            <person name="Parro V."/>
            <person name="Pohl T.M."/>
            <person name="Portetelle D."/>
            <person name="Porwollik S."/>
            <person name="Prescott A.M."/>
            <person name="Presecan E."/>
            <person name="Pujic P."/>
            <person name="Purnelle B."/>
            <person name="Rapoport G."/>
            <person name="Rey M."/>
            <person name="Reynolds S."/>
            <person name="Rieger M."/>
            <person name="Rivolta C."/>
            <person name="Rocha E."/>
            <person name="Roche B."/>
            <person name="Rose M."/>
            <person name="Sadaie Y."/>
            <person name="Sato T."/>
            <person name="Scanlan E."/>
            <person name="Schleich S."/>
            <person name="Schroeter R."/>
            <person name="Scoffone F."/>
            <person name="Sekiguchi J."/>
            <person name="Sekowska A."/>
            <person name="Seror S.J."/>
            <person name="Serror P."/>
            <person name="Shin B.-S."/>
            <person name="Soldo B."/>
            <person name="Sorokin A."/>
            <person name="Tacconi E."/>
            <person name="Takagi T."/>
            <person name="Takahashi H."/>
            <person name="Takemaru K."/>
            <person name="Takeuchi M."/>
            <person name="Tamakoshi A."/>
            <person name="Tanaka T."/>
            <person name="Terpstra P."/>
            <person name="Tognoni A."/>
            <person name="Tosato V."/>
            <person name="Uchiyama S."/>
            <person name="Vandenbol M."/>
            <person name="Vannier F."/>
            <person name="Vassarotti A."/>
            <person name="Viari A."/>
            <person name="Wambutt R."/>
            <person name="Wedler E."/>
            <person name="Wedler H."/>
            <person name="Weitzenegger T."/>
            <person name="Winters P."/>
            <person name="Wipat A."/>
            <person name="Yamamoto H."/>
            <person name="Yamane K."/>
            <person name="Yasumoto K."/>
            <person name="Yata K."/>
            <person name="Yoshida K."/>
            <person name="Yoshikawa H.-F."/>
            <person name="Zumstein E."/>
            <person name="Yoshikawa H."/>
            <person name="Danchin A."/>
        </authorList>
    </citation>
    <scope>NUCLEOTIDE SEQUENCE [LARGE SCALE GENOMIC DNA]</scope>
    <source>
        <strain>168</strain>
    </source>
</reference>
<reference key="3">
    <citation type="journal article" date="1993" name="Mol. Microbiol.">
        <title>Molecular analysis of three major wall-associated proteins of Bacillus subtilis 168: evidence for processing of the product of a gene encoding a 258 kDa precursor two-domain ligand-binding protein.</title>
        <authorList>
            <person name="Foster S.J."/>
        </authorList>
    </citation>
    <scope>NUCLEOTIDE SEQUENCE [GENOMIC DNA] OF 134-311</scope>
    <source>
        <strain>168</strain>
    </source>
</reference>
<gene>
    <name type="primary">yxxF</name>
    <name type="ordered locus">BSU39240</name>
    <name type="ORF">N17F</name>
</gene>
<keyword id="KW-1003">Cell membrane</keyword>
<keyword id="KW-0472">Membrane</keyword>
<keyword id="KW-1185">Reference proteome</keyword>
<keyword id="KW-0677">Repeat</keyword>
<keyword id="KW-0812">Transmembrane</keyword>
<keyword id="KW-1133">Transmembrane helix</keyword>
<keyword id="KW-0813">Transport</keyword>
<feature type="chain" id="PRO_0000108187" description="Uncharacterized transporter YxxF">
    <location>
        <begin position="1"/>
        <end position="311"/>
    </location>
</feature>
<feature type="transmembrane region" description="Helical" evidence="1">
    <location>
        <begin position="13"/>
        <end position="33"/>
    </location>
</feature>
<feature type="transmembrane region" description="Helical" evidence="1">
    <location>
        <begin position="41"/>
        <end position="61"/>
    </location>
</feature>
<feature type="transmembrane region" description="Helical" evidence="1">
    <location>
        <begin position="76"/>
        <end position="96"/>
    </location>
</feature>
<feature type="transmembrane region" description="Helical" evidence="1">
    <location>
        <begin position="103"/>
        <end position="123"/>
    </location>
</feature>
<feature type="transmembrane region" description="Helical" evidence="1">
    <location>
        <begin position="128"/>
        <end position="148"/>
    </location>
</feature>
<feature type="transmembrane region" description="Helical" evidence="1">
    <location>
        <begin position="157"/>
        <end position="177"/>
    </location>
</feature>
<feature type="transmembrane region" description="Helical" evidence="1">
    <location>
        <begin position="192"/>
        <end position="212"/>
    </location>
</feature>
<feature type="transmembrane region" description="Helical" evidence="1">
    <location>
        <begin position="218"/>
        <end position="238"/>
    </location>
</feature>
<feature type="transmembrane region" description="Helical" evidence="1">
    <location>
        <begin position="248"/>
        <end position="268"/>
    </location>
</feature>
<feature type="transmembrane region" description="Helical" evidence="1">
    <location>
        <begin position="272"/>
        <end position="292"/>
    </location>
</feature>
<feature type="domain" description="EamA 1">
    <location>
        <begin position="24"/>
        <end position="147"/>
    </location>
</feature>
<feature type="domain" description="EamA 2">
    <location>
        <begin position="166"/>
        <end position="292"/>
    </location>
</feature>
<name>YXXF_BACSU</name>